<proteinExistence type="inferred from homology"/>
<evidence type="ECO:0000250" key="1"/>
<evidence type="ECO:0000255" key="2">
    <source>
        <dbReference type="PROSITE-ProRule" id="PRU00176"/>
    </source>
</evidence>
<evidence type="ECO:0000256" key="3">
    <source>
        <dbReference type="SAM" id="MobiDB-lite"/>
    </source>
</evidence>
<evidence type="ECO:0000305" key="4"/>
<name>NOP12_GIBZE</name>
<organism>
    <name type="scientific">Gibberella zeae (strain ATCC MYA-4620 / CBS 123657 / FGSC 9075 / NRRL 31084 / PH-1)</name>
    <name type="common">Wheat head blight fungus</name>
    <name type="synonym">Fusarium graminearum</name>
    <dbReference type="NCBI Taxonomy" id="229533"/>
    <lineage>
        <taxon>Eukaryota</taxon>
        <taxon>Fungi</taxon>
        <taxon>Dikarya</taxon>
        <taxon>Ascomycota</taxon>
        <taxon>Pezizomycotina</taxon>
        <taxon>Sordariomycetes</taxon>
        <taxon>Hypocreomycetidae</taxon>
        <taxon>Hypocreales</taxon>
        <taxon>Nectriaceae</taxon>
        <taxon>Fusarium</taxon>
    </lineage>
</organism>
<reference key="1">
    <citation type="journal article" date="2007" name="Science">
        <title>The Fusarium graminearum genome reveals a link between localized polymorphism and pathogen specialization.</title>
        <authorList>
            <person name="Cuomo C.A."/>
            <person name="Gueldener U."/>
            <person name="Xu J.-R."/>
            <person name="Trail F."/>
            <person name="Turgeon B.G."/>
            <person name="Di Pietro A."/>
            <person name="Walton J.D."/>
            <person name="Ma L.-J."/>
            <person name="Baker S.E."/>
            <person name="Rep M."/>
            <person name="Adam G."/>
            <person name="Antoniw J."/>
            <person name="Baldwin T."/>
            <person name="Calvo S.E."/>
            <person name="Chang Y.-L."/>
            <person name="DeCaprio D."/>
            <person name="Gale L.R."/>
            <person name="Gnerre S."/>
            <person name="Goswami R.S."/>
            <person name="Hammond-Kosack K."/>
            <person name="Harris L.J."/>
            <person name="Hilburn K."/>
            <person name="Kennell J.C."/>
            <person name="Kroken S."/>
            <person name="Magnuson J.K."/>
            <person name="Mannhaupt G."/>
            <person name="Mauceli E.W."/>
            <person name="Mewes H.-W."/>
            <person name="Mitterbauer R."/>
            <person name="Muehlbauer G."/>
            <person name="Muensterkoetter M."/>
            <person name="Nelson D."/>
            <person name="O'Donnell K."/>
            <person name="Ouellet T."/>
            <person name="Qi W."/>
            <person name="Quesneville H."/>
            <person name="Roncero M.I.G."/>
            <person name="Seong K.-Y."/>
            <person name="Tetko I.V."/>
            <person name="Urban M."/>
            <person name="Waalwijk C."/>
            <person name="Ward T.J."/>
            <person name="Yao J."/>
            <person name="Birren B.W."/>
            <person name="Kistler H.C."/>
        </authorList>
    </citation>
    <scope>NUCLEOTIDE SEQUENCE [LARGE SCALE GENOMIC DNA]</scope>
    <source>
        <strain>ATCC MYA-4620 / CBS 123657 / FGSC 9075 / NRRL 31084 / PH-1</strain>
    </source>
</reference>
<reference key="2">
    <citation type="journal article" date="2010" name="Nature">
        <title>Comparative genomics reveals mobile pathogenicity chromosomes in Fusarium.</title>
        <authorList>
            <person name="Ma L.-J."/>
            <person name="van der Does H.C."/>
            <person name="Borkovich K.A."/>
            <person name="Coleman J.J."/>
            <person name="Daboussi M.-J."/>
            <person name="Di Pietro A."/>
            <person name="Dufresne M."/>
            <person name="Freitag M."/>
            <person name="Grabherr M."/>
            <person name="Henrissat B."/>
            <person name="Houterman P.M."/>
            <person name="Kang S."/>
            <person name="Shim W.-B."/>
            <person name="Woloshuk C."/>
            <person name="Xie X."/>
            <person name="Xu J.-R."/>
            <person name="Antoniw J."/>
            <person name="Baker S.E."/>
            <person name="Bluhm B.H."/>
            <person name="Breakspear A."/>
            <person name="Brown D.W."/>
            <person name="Butchko R.A.E."/>
            <person name="Chapman S."/>
            <person name="Coulson R."/>
            <person name="Coutinho P.M."/>
            <person name="Danchin E.G.J."/>
            <person name="Diener A."/>
            <person name="Gale L.R."/>
            <person name="Gardiner D.M."/>
            <person name="Goff S."/>
            <person name="Hammond-Kosack K.E."/>
            <person name="Hilburn K."/>
            <person name="Hua-Van A."/>
            <person name="Jonkers W."/>
            <person name="Kazan K."/>
            <person name="Kodira C.D."/>
            <person name="Koehrsen M."/>
            <person name="Kumar L."/>
            <person name="Lee Y.-H."/>
            <person name="Li L."/>
            <person name="Manners J.M."/>
            <person name="Miranda-Saavedra D."/>
            <person name="Mukherjee M."/>
            <person name="Park G."/>
            <person name="Park J."/>
            <person name="Park S.-Y."/>
            <person name="Proctor R.H."/>
            <person name="Regev A."/>
            <person name="Ruiz-Roldan M.C."/>
            <person name="Sain D."/>
            <person name="Sakthikumar S."/>
            <person name="Sykes S."/>
            <person name="Schwartz D.C."/>
            <person name="Turgeon B.G."/>
            <person name="Wapinski I."/>
            <person name="Yoder O."/>
            <person name="Young S."/>
            <person name="Zeng Q."/>
            <person name="Zhou S."/>
            <person name="Galagan J."/>
            <person name="Cuomo C.A."/>
            <person name="Kistler H.C."/>
            <person name="Rep M."/>
        </authorList>
    </citation>
    <scope>GENOME REANNOTATION</scope>
    <source>
        <strain>ATCC MYA-4620 / CBS 123657 / FGSC 9075 / NRRL 31084 / PH-1</strain>
    </source>
</reference>
<reference key="3">
    <citation type="journal article" date="2015" name="BMC Genomics">
        <title>The completed genome sequence of the pathogenic ascomycete fungus Fusarium graminearum.</title>
        <authorList>
            <person name="King R."/>
            <person name="Urban M."/>
            <person name="Hammond-Kosack M.C.U."/>
            <person name="Hassani-Pak K."/>
            <person name="Hammond-Kosack K.E."/>
        </authorList>
    </citation>
    <scope>NUCLEOTIDE SEQUENCE [LARGE SCALE GENOMIC DNA]</scope>
    <source>
        <strain>ATCC MYA-4620 / CBS 123657 / FGSC 9075 / NRRL 31084 / PH-1</strain>
    </source>
</reference>
<accession>Q4IQW0</accession>
<accession>A0A098D1J4</accession>
<accession>A0A0E0RM47</accession>
<accession>A0A1C3YHP0</accession>
<accession>A0A1I9EVF2</accession>
<accession>V6R102</accession>
<gene>
    <name type="primary">NOP12</name>
    <name type="ORF">FGRAMPH1_01T01039</name>
    <name type="ORF">FGRRES_00398</name>
    <name type="ORF">FGSG_00398</name>
</gene>
<dbReference type="EMBL" id="DS231663">
    <property type="protein sequence ID" value="ESU05575.1"/>
    <property type="molecule type" value="Genomic_DNA"/>
</dbReference>
<dbReference type="EMBL" id="HG970332">
    <property type="protein sequence ID" value="SCB64048.1"/>
    <property type="status" value="ALT_INIT"/>
    <property type="molecule type" value="Genomic_DNA"/>
</dbReference>
<dbReference type="RefSeq" id="XP_011316060.1">
    <property type="nucleotide sequence ID" value="XM_011317758.1"/>
</dbReference>
<dbReference type="SMR" id="Q4IQW0"/>
<dbReference type="FunCoup" id="Q4IQW0">
    <property type="interactions" value="768"/>
</dbReference>
<dbReference type="STRING" id="229533.Q4IQW0"/>
<dbReference type="GeneID" id="23547888"/>
<dbReference type="KEGG" id="fgr:FGSG_00398"/>
<dbReference type="eggNOG" id="KOG0118">
    <property type="taxonomic scope" value="Eukaryota"/>
</dbReference>
<dbReference type="HOGENOM" id="CLU_006468_3_0_1"/>
<dbReference type="InParanoid" id="Q4IQW0"/>
<dbReference type="OrthoDB" id="137850at110618"/>
<dbReference type="Proteomes" id="UP000070720">
    <property type="component" value="Chromosome 1"/>
</dbReference>
<dbReference type="GO" id="GO:0005730">
    <property type="term" value="C:nucleolus"/>
    <property type="evidence" value="ECO:0007669"/>
    <property type="project" value="UniProtKB-SubCell"/>
</dbReference>
<dbReference type="GO" id="GO:0019843">
    <property type="term" value="F:rRNA binding"/>
    <property type="evidence" value="ECO:0007669"/>
    <property type="project" value="TreeGrafter"/>
</dbReference>
<dbReference type="GO" id="GO:0000463">
    <property type="term" value="P:maturation of LSU-rRNA from tricistronic rRNA transcript (SSU-rRNA, 5.8S rRNA, LSU-rRNA)"/>
    <property type="evidence" value="ECO:0007669"/>
    <property type="project" value="TreeGrafter"/>
</dbReference>
<dbReference type="Gene3D" id="3.30.70.330">
    <property type="match status" value="2"/>
</dbReference>
<dbReference type="InterPro" id="IPR012677">
    <property type="entry name" value="Nucleotide-bd_a/b_plait_sf"/>
</dbReference>
<dbReference type="InterPro" id="IPR035979">
    <property type="entry name" value="RBD_domain_sf"/>
</dbReference>
<dbReference type="InterPro" id="IPR000504">
    <property type="entry name" value="RRM_dom"/>
</dbReference>
<dbReference type="PANTHER" id="PTHR23236">
    <property type="entry name" value="EUKARYOTIC TRANSLATION INITIATION FACTOR 4B/4H"/>
    <property type="match status" value="1"/>
</dbReference>
<dbReference type="PANTHER" id="PTHR23236:SF25">
    <property type="entry name" value="RNA-BINDING PROTEIN 34"/>
    <property type="match status" value="1"/>
</dbReference>
<dbReference type="Pfam" id="PF00076">
    <property type="entry name" value="RRM_1"/>
    <property type="match status" value="1"/>
</dbReference>
<dbReference type="SMART" id="SM00360">
    <property type="entry name" value="RRM"/>
    <property type="match status" value="1"/>
</dbReference>
<dbReference type="SUPFAM" id="SSF54928">
    <property type="entry name" value="RNA-binding domain, RBD"/>
    <property type="match status" value="2"/>
</dbReference>
<dbReference type="PROSITE" id="PS50102">
    <property type="entry name" value="RRM"/>
    <property type="match status" value="1"/>
</dbReference>
<keyword id="KW-0539">Nucleus</keyword>
<keyword id="KW-1185">Reference proteome</keyword>
<keyword id="KW-0677">Repeat</keyword>
<keyword id="KW-0690">Ribosome biogenesis</keyword>
<keyword id="KW-0694">RNA-binding</keyword>
<keyword id="KW-0698">rRNA processing</keyword>
<sequence length="559" mass="61542">MAKGSKGLRASSKAVDPTLDALFASSAGPVQAPAKSKYSTLLDQKVREPAKPKVHLEEDDEVLSEISEELSFEEDGPSDEDEDEDEDEENSEQEDGSGDEQEEEESEDVDETMKDAPVELDDIIDATEDKSNKERKRKRKNDNDDLEGKYLDKVAAEEEADRAGKRQKNDALTKTEKPAVDEEDAGNESDIPVHETLVKDSKASDLDKAARTVFLANVSTEAISSKSAKKTLMAHLSSVLEKDATPPQTIESLRFRSVAFAGGSLPKRAAYITKSLMDSTTKSANAYVVYSTTAAARTAATKLNGTQVLDRHLRVDSVAHPSPTDHRRCVFVGNLGFVDDETVLNTNAEGDTTEKKKNKTPSDIEEGLWRTFSTQGKVENVRVVRDSKTRVGKGFAYVQFYDANDVEAALLLDGKKFPPMLPRKLRVTRAKDPRKTALAQERARGKHISTNGPKSTKYKHKATPEEQSMAGRTSKLLGRSAAVQQRHKKRPSAHGESREAEGQPAGIKGPEQFVFEGRRASARDGLPKDLKQKKGKGKKSGRPQNHGTKRASEWKKKKN</sequence>
<comment type="function">
    <text evidence="1">Involved in pre-25S rRNA processing.</text>
</comment>
<comment type="subcellular location">
    <subcellularLocation>
        <location evidence="1">Nucleus</location>
        <location evidence="1">Nucleolus</location>
    </subcellularLocation>
</comment>
<comment type="similarity">
    <text evidence="4">Belongs to the RRM RBM34 family.</text>
</comment>
<comment type="sequence caution" evidence="4">
    <conflict type="erroneous initiation">
        <sequence resource="EMBL-CDS" id="SCB64048"/>
    </conflict>
    <text>Extended N-terminus.</text>
</comment>
<protein>
    <recommendedName>
        <fullName>Nucleolar protein 12</fullName>
    </recommendedName>
</protein>
<feature type="chain" id="PRO_0000081670" description="Nucleolar protein 12">
    <location>
        <begin position="1"/>
        <end position="559"/>
    </location>
</feature>
<feature type="domain" description="RRM 1" evidence="2">
    <location>
        <begin position="211"/>
        <end position="320"/>
    </location>
</feature>
<feature type="domain" description="RRM 2" evidence="2">
    <location>
        <begin position="328"/>
        <end position="432"/>
    </location>
</feature>
<feature type="region of interest" description="Disordered" evidence="3">
    <location>
        <begin position="24"/>
        <end position="194"/>
    </location>
</feature>
<feature type="region of interest" description="Disordered" evidence="3">
    <location>
        <begin position="429"/>
        <end position="559"/>
    </location>
</feature>
<feature type="compositionally biased region" description="Basic and acidic residues" evidence="3">
    <location>
        <begin position="44"/>
        <end position="56"/>
    </location>
</feature>
<feature type="compositionally biased region" description="Acidic residues" evidence="3">
    <location>
        <begin position="57"/>
        <end position="110"/>
    </location>
</feature>
<feature type="compositionally biased region" description="Basic and acidic residues" evidence="3">
    <location>
        <begin position="141"/>
        <end position="180"/>
    </location>
</feature>
<feature type="compositionally biased region" description="Basic and acidic residues" evidence="3">
    <location>
        <begin position="516"/>
        <end position="532"/>
    </location>
</feature>
<feature type="compositionally biased region" description="Basic and acidic residues" evidence="3">
    <location>
        <begin position="550"/>
        <end position="559"/>
    </location>
</feature>